<sequence length="255" mass="27428">MAHSSATAGPQADYSGEIAELYDLVHQGKGKDYHREAADLAALVRRHSPKAASLLDVACGTGMHLRHLADSFGTVEGLELSADMLAIARRRNPDAVLHHGDMRDFSLGRRFSAVTCMFSSIGHLAGQAELDAALERFAAHVLPDGVVVVEPWWFPENFTPGYVAAGTVEAGGTTVTRVSHSSREGEATRIEVHYLVAGPDRGITHHEESHRITLFTREQYERAFTAAGLSVEFMPGGPSGRGLFTGLPGAKGETR</sequence>
<gene>
    <name type="primary">tylM1</name>
    <name type="synonym">tylMI</name>
</gene>
<accession>P95748</accession>
<comment type="function">
    <text evidence="1 2 3">S-adenosyl-L-methionine-dependent methyltransferase involved in the biosynthesis of mycaminose, an essential structural component of the macrolide antibiotic tylosin. Involved in the last step in mycaminose biosynthesis by mediating dimethylation of the hexose C-3' amino group.</text>
</comment>
<comment type="catalytic activity">
    <reaction evidence="1">
        <text>dTDP-3-amino-3,6-dideoxy-alpha-D-glucose + 2 S-adenosyl-L-methionine = dTDP-alpha-D-mycaminose + 2 S-adenosyl-L-homocysteine + 2 H(+)</text>
        <dbReference type="Rhea" id="RHEA:31671"/>
        <dbReference type="ChEBI" id="CHEBI:15378"/>
        <dbReference type="ChEBI" id="CHEBI:57856"/>
        <dbReference type="ChEBI" id="CHEBI:59789"/>
        <dbReference type="ChEBI" id="CHEBI:63265"/>
        <dbReference type="ChEBI" id="CHEBI:63268"/>
        <dbReference type="EC" id="2.1.1.235"/>
    </reaction>
</comment>
<comment type="biophysicochemical properties">
    <kinetics>
        <KM evidence="1">118.4 uM for dTDP-3-amino-3,4,6-trideoxy-alpha-D-glucopyranose</KM>
        <KM evidence="1">46.8 uM for TDP-3-N-methylamino-3,6-dideoxy-R-D-glucopyranose</KM>
        <KM evidence="1">59.4 uM for dTDP-3-amino-3,6-dideoxy-alpha-D-glucopyranose</KM>
        <text>kcat is 7.2 min(-1) with dTDP-3-amino-3,4,6-trideoxy-alpha-D-glucopyranose as substrate. kcat is 32.5 min(-1) with TDP-3-N-methylamino-3,6-dideoxy-R-D-glucopyranose as substrate. kcat is 9.9 min(-1) with dTDP-3-amino-3,6-dideoxy-alpha-D-glucopyranose as substrate.</text>
    </kinetics>
</comment>
<comment type="pathway">
    <text evidence="3">Antibiotic biosynthesis; tylosin biosynthesis.</text>
</comment>
<comment type="subunit">
    <text evidence="1 2">Homodimer.</text>
</comment>
<comment type="domain">
    <text evidence="2">His-123 is a strong candicate for an active site that hydrogen bonds to a water molecule which in turn hydrogen bonds to the C-3' amino group. However, it is not conserved in related S.venezuelae DesVI methyltransferase and its mutagenesis does not completely abolish catalytic activity (PubMed:21142177).</text>
</comment>
<comment type="similarity">
    <text evidence="4">Belongs to the methyltransferase TylM1/DesVI family.</text>
</comment>
<organism>
    <name type="scientific">Streptomyces fradiae</name>
    <name type="common">Streptomyces roseoflavus</name>
    <dbReference type="NCBI Taxonomy" id="1906"/>
    <lineage>
        <taxon>Bacteria</taxon>
        <taxon>Bacillati</taxon>
        <taxon>Actinomycetota</taxon>
        <taxon>Actinomycetes</taxon>
        <taxon>Kitasatosporales</taxon>
        <taxon>Streptomycetaceae</taxon>
        <taxon>Streptomyces</taxon>
    </lineage>
</organism>
<reference key="1">
    <citation type="journal article" date="1997" name="Gene">
        <title>Analysis of four tylosin biosynthetic genes from the tylLM region of Streptomyces fradiae.</title>
        <authorList>
            <person name="Gandecha A.R."/>
            <person name="Large S.L."/>
            <person name="Cundliffe E."/>
        </authorList>
    </citation>
    <scope>NUCLEOTIDE SEQUENCE [GENOMIC DNA]</scope>
    <scope>FUNCTION</scope>
    <scope>PATHWAY</scope>
    <source>
        <strain>T59235</strain>
    </source>
</reference>
<reference key="2">
    <citation type="journal article" date="2002" name="Biochemistry">
        <title>Expression, purification, and characterization of two N,N-dimethyltransferases, tylM1 and desVI, involved in the biosynthesis of mycaminose and desosamine.</title>
        <authorList>
            <person name="Chen H."/>
            <person name="Yamase H."/>
            <person name="Murakami K."/>
            <person name="Chang C.W."/>
            <person name="Zhao L."/>
            <person name="Zhao Z."/>
            <person name="Liu H.W."/>
        </authorList>
    </citation>
    <scope>PROTEIN SEQUENCE OF 2-11</scope>
    <scope>FUNCTION</scope>
    <scope>CATALYTIC ACTIVITY</scope>
    <scope>SUBUNIT</scope>
    <scope>BIOPHYSICOCHEMICAL PROPERTIES</scope>
</reference>
<reference key="3">
    <citation type="journal article" date="2011" name="Biochemistry">
        <title>Molecular architecture of TylM1 from Streptomyces fradiae: an N,N-dimethyltransferase involved in the production of dTDP-D-mycaminose.</title>
        <authorList>
            <person name="Carney A.E."/>
            <person name="Holden H.M."/>
        </authorList>
    </citation>
    <scope>X-RAY CRYSTALLOGRAPHY (1.35 ANGSTROMS) IN COMPLEX WITH S-ADENOSYL-L-METHIONINE</scope>
    <scope>FUNCTION</scope>
    <scope>SUBUNIT</scope>
    <scope>MUTAGENESIS OF HIS-123</scope>
</reference>
<proteinExistence type="evidence at protein level"/>
<name>TYLM1_STRFR</name>
<keyword id="KW-0002">3D-structure</keyword>
<keyword id="KW-0045">Antibiotic biosynthesis</keyword>
<keyword id="KW-0903">Direct protein sequencing</keyword>
<keyword id="KW-0489">Methyltransferase</keyword>
<keyword id="KW-0949">S-adenosyl-L-methionine</keyword>
<keyword id="KW-0808">Transferase</keyword>
<protein>
    <recommendedName>
        <fullName>dTDP-3-amino-3,6-dideoxy-alpha-D-glucopyranose N,N-dimethyltransferase</fullName>
        <ecNumber>2.1.1.235</ecNumber>
    </recommendedName>
    <alternativeName>
        <fullName>Tylosin biosynthesis protein M1</fullName>
    </alternativeName>
</protein>
<dbReference type="EC" id="2.1.1.235"/>
<dbReference type="EMBL" id="X81885">
    <property type="protein sequence ID" value="CAA57473.2"/>
    <property type="molecule type" value="Genomic_DNA"/>
</dbReference>
<dbReference type="RefSeq" id="WP_050364681.1">
    <property type="nucleotide sequence ID" value="NZ_LGSP01000138.1"/>
</dbReference>
<dbReference type="PDB" id="3PFG">
    <property type="method" value="X-ray"/>
    <property type="resolution" value="1.35 A"/>
    <property type="chains" value="A=1-255"/>
</dbReference>
<dbReference type="PDB" id="3PFH">
    <property type="method" value="X-ray"/>
    <property type="resolution" value="1.79 A"/>
    <property type="chains" value="A/D=1-255"/>
</dbReference>
<dbReference type="PDB" id="3PX2">
    <property type="method" value="X-ray"/>
    <property type="resolution" value="1.65 A"/>
    <property type="chains" value="A/D=1-255"/>
</dbReference>
<dbReference type="PDB" id="3PX3">
    <property type="method" value="X-ray"/>
    <property type="resolution" value="1.80 A"/>
    <property type="chains" value="A/D=1-255"/>
</dbReference>
<dbReference type="PDB" id="4OQD">
    <property type="method" value="X-ray"/>
    <property type="resolution" value="1.60 A"/>
    <property type="chains" value="A/B/C/D=1-255"/>
</dbReference>
<dbReference type="PDB" id="4OQE">
    <property type="method" value="X-ray"/>
    <property type="resolution" value="2.20 A"/>
    <property type="chains" value="A/B=1-255"/>
</dbReference>
<dbReference type="PDB" id="6M81">
    <property type="method" value="X-ray"/>
    <property type="resolution" value="1.78 A"/>
    <property type="chains" value="A/B/C/D=1-255"/>
</dbReference>
<dbReference type="PDB" id="6M82">
    <property type="method" value="X-ray"/>
    <property type="resolution" value="1.40 A"/>
    <property type="chains" value="A=1-255"/>
</dbReference>
<dbReference type="PDB" id="6M83">
    <property type="method" value="X-ray"/>
    <property type="resolution" value="1.37 A"/>
    <property type="chains" value="A=1-255"/>
</dbReference>
<dbReference type="PDBsum" id="3PFG"/>
<dbReference type="PDBsum" id="3PFH"/>
<dbReference type="PDBsum" id="3PX2"/>
<dbReference type="PDBsum" id="3PX3"/>
<dbReference type="PDBsum" id="4OQD"/>
<dbReference type="PDBsum" id="4OQE"/>
<dbReference type="PDBsum" id="6M81"/>
<dbReference type="PDBsum" id="6M82"/>
<dbReference type="PDBsum" id="6M83"/>
<dbReference type="SMR" id="P95748"/>
<dbReference type="STRING" id="1906.SFRA_32300"/>
<dbReference type="KEGG" id="ag:CAA57473"/>
<dbReference type="eggNOG" id="COG2226">
    <property type="taxonomic scope" value="Bacteria"/>
</dbReference>
<dbReference type="BioCyc" id="MetaCyc:MONOMER-18381"/>
<dbReference type="BRENDA" id="2.1.1.235">
    <property type="organism ID" value="5932"/>
</dbReference>
<dbReference type="BRENDA" id="2.1.1.236">
    <property type="organism ID" value="5932"/>
</dbReference>
<dbReference type="UniPathway" id="UPA01018"/>
<dbReference type="EvolutionaryTrace" id="P95748"/>
<dbReference type="GO" id="GO:0042803">
    <property type="term" value="F:protein homodimerization activity"/>
    <property type="evidence" value="ECO:0000314"/>
    <property type="project" value="UniProtKB"/>
</dbReference>
<dbReference type="GO" id="GO:0008757">
    <property type="term" value="F:S-adenosylmethionine-dependent methyltransferase activity"/>
    <property type="evidence" value="ECO:0000314"/>
    <property type="project" value="UniProtKB"/>
</dbReference>
<dbReference type="GO" id="GO:0017000">
    <property type="term" value="P:antibiotic biosynthetic process"/>
    <property type="evidence" value="ECO:0000314"/>
    <property type="project" value="UniProtKB"/>
</dbReference>
<dbReference type="GO" id="GO:0032259">
    <property type="term" value="P:methylation"/>
    <property type="evidence" value="ECO:0000314"/>
    <property type="project" value="UniProtKB"/>
</dbReference>
<dbReference type="CDD" id="cd02440">
    <property type="entry name" value="AdoMet_MTases"/>
    <property type="match status" value="1"/>
</dbReference>
<dbReference type="FunFam" id="3.40.50.150:FF:000387">
    <property type="entry name" value="dTDP-3-amino-3,6-dideoxy-alpha-D-glucopyranose N,N-dimethyltransferase"/>
    <property type="match status" value="1"/>
</dbReference>
<dbReference type="Gene3D" id="2.20.130.10">
    <property type="entry name" value="CAC2371-like domains"/>
    <property type="match status" value="1"/>
</dbReference>
<dbReference type="Gene3D" id="3.40.50.150">
    <property type="entry name" value="Vaccinia Virus protein VP39"/>
    <property type="match status" value="1"/>
</dbReference>
<dbReference type="InterPro" id="IPR041698">
    <property type="entry name" value="Methyltransf_25"/>
</dbReference>
<dbReference type="InterPro" id="IPR029063">
    <property type="entry name" value="SAM-dependent_MTases_sf"/>
</dbReference>
<dbReference type="PANTHER" id="PTHR43464">
    <property type="entry name" value="METHYLTRANSFERASE"/>
    <property type="match status" value="1"/>
</dbReference>
<dbReference type="PANTHER" id="PTHR43464:SF19">
    <property type="entry name" value="UBIQUINONE BIOSYNTHESIS O-METHYLTRANSFERASE, MITOCHONDRIAL"/>
    <property type="match status" value="1"/>
</dbReference>
<dbReference type="Pfam" id="PF13649">
    <property type="entry name" value="Methyltransf_25"/>
    <property type="match status" value="1"/>
</dbReference>
<dbReference type="SUPFAM" id="SSF53335">
    <property type="entry name" value="S-adenosyl-L-methionine-dependent methyltransferases"/>
    <property type="match status" value="1"/>
</dbReference>
<feature type="initiator methionine" description="Removed" evidence="5">
    <location>
        <position position="1"/>
    </location>
</feature>
<feature type="chain" id="PRO_0000418453" description="dTDP-3-amino-3,6-dideoxy-alpha-D-glucopyranose N,N-dimethyltransferase">
    <location>
        <begin position="2"/>
        <end position="255"/>
    </location>
</feature>
<feature type="binding site" evidence="2">
    <location>
        <position position="14"/>
    </location>
    <ligand>
        <name>S-adenosyl-L-methionine</name>
        <dbReference type="ChEBI" id="CHEBI:59789"/>
    </ligand>
</feature>
<feature type="binding site" evidence="2">
    <location>
        <position position="22"/>
    </location>
    <ligand>
        <name>S-adenosyl-L-methionine</name>
        <dbReference type="ChEBI" id="CHEBI:59789"/>
    </ligand>
</feature>
<feature type="binding site" evidence="2">
    <location>
        <position position="33"/>
    </location>
    <ligand>
        <name>S-adenosyl-L-methionine</name>
        <dbReference type="ChEBI" id="CHEBI:59789"/>
    </ligand>
</feature>
<feature type="binding site">
    <location>
        <begin position="58"/>
        <end position="59"/>
    </location>
    <ligand>
        <name>S-adenosyl-L-methionine</name>
        <dbReference type="ChEBI" id="CHEBI:59789"/>
    </ligand>
</feature>
<feature type="binding site" evidence="2">
    <location>
        <position position="58"/>
    </location>
    <ligand>
        <name>S-adenosyl-L-methionine</name>
        <dbReference type="ChEBI" id="CHEBI:59789"/>
    </ligand>
</feature>
<feature type="binding site" evidence="2">
    <location>
        <position position="79"/>
    </location>
    <ligand>
        <name>S-adenosyl-L-methionine</name>
        <dbReference type="ChEBI" id="CHEBI:59789"/>
    </ligand>
</feature>
<feature type="binding site">
    <location>
        <begin position="101"/>
        <end position="102"/>
    </location>
    <ligand>
        <name>S-adenosyl-L-methionine</name>
        <dbReference type="ChEBI" id="CHEBI:59789"/>
    </ligand>
</feature>
<feature type="binding site" evidence="2">
    <location>
        <position position="117"/>
    </location>
    <ligand>
        <name>S-adenosyl-L-methionine</name>
        <dbReference type="ChEBI" id="CHEBI:59789"/>
    </ligand>
</feature>
<feature type="mutagenesis site" description="Strongly reduced activity." evidence="2">
    <original>H</original>
    <variation>A</variation>
    <variation>N</variation>
    <location>
        <position position="123"/>
    </location>
</feature>
<feature type="helix" evidence="6">
    <location>
        <begin position="16"/>
        <end position="28"/>
    </location>
</feature>
<feature type="helix" evidence="6">
    <location>
        <begin position="33"/>
        <end position="47"/>
    </location>
</feature>
<feature type="strand" evidence="6">
    <location>
        <begin position="53"/>
        <end position="57"/>
    </location>
</feature>
<feature type="helix" evidence="6">
    <location>
        <begin position="63"/>
        <end position="68"/>
    </location>
</feature>
<feature type="turn" evidence="6">
    <location>
        <begin position="69"/>
        <end position="71"/>
    </location>
</feature>
<feature type="strand" evidence="6">
    <location>
        <begin position="72"/>
        <end position="80"/>
    </location>
</feature>
<feature type="helix" evidence="6">
    <location>
        <begin position="82"/>
        <end position="91"/>
    </location>
</feature>
<feature type="strand" evidence="6">
    <location>
        <begin position="95"/>
        <end position="99"/>
    </location>
</feature>
<feature type="turn" evidence="6">
    <location>
        <begin position="102"/>
        <end position="104"/>
    </location>
</feature>
<feature type="strand" evidence="6">
    <location>
        <begin position="111"/>
        <end position="116"/>
    </location>
</feature>
<feature type="helix" evidence="6">
    <location>
        <begin position="120"/>
        <end position="123"/>
    </location>
</feature>
<feature type="helix" evidence="6">
    <location>
        <begin position="126"/>
        <end position="139"/>
    </location>
</feature>
<feature type="strand" evidence="6">
    <location>
        <begin position="141"/>
        <end position="149"/>
    </location>
</feature>
<feature type="turn" evidence="6">
    <location>
        <begin position="155"/>
        <end position="157"/>
    </location>
</feature>
<feature type="strand" evidence="6">
    <location>
        <begin position="162"/>
        <end position="170"/>
    </location>
</feature>
<feature type="strand" evidence="6">
    <location>
        <begin position="173"/>
        <end position="184"/>
    </location>
</feature>
<feature type="strand" evidence="6">
    <location>
        <begin position="187"/>
        <end position="198"/>
    </location>
</feature>
<feature type="turn" evidence="6">
    <location>
        <begin position="199"/>
        <end position="201"/>
    </location>
</feature>
<feature type="strand" evidence="6">
    <location>
        <begin position="202"/>
        <end position="213"/>
    </location>
</feature>
<feature type="helix" evidence="6">
    <location>
        <begin position="217"/>
        <end position="226"/>
    </location>
</feature>
<feature type="strand" evidence="6">
    <location>
        <begin position="229"/>
        <end position="236"/>
    </location>
</feature>
<feature type="turn" evidence="6">
    <location>
        <begin position="237"/>
        <end position="239"/>
    </location>
</feature>
<feature type="strand" evidence="6">
    <location>
        <begin position="243"/>
        <end position="248"/>
    </location>
</feature>
<evidence type="ECO:0000269" key="1">
    <source>
    </source>
</evidence>
<evidence type="ECO:0000269" key="2">
    <source>
    </source>
</evidence>
<evidence type="ECO:0000269" key="3">
    <source>
    </source>
</evidence>
<evidence type="ECO:0000305" key="4"/>
<evidence type="ECO:0000305" key="5">
    <source>
    </source>
</evidence>
<evidence type="ECO:0007829" key="6">
    <source>
        <dbReference type="PDB" id="3PFG"/>
    </source>
</evidence>